<accession>Q8YSJ2</accession>
<sequence>MARLALLSVSNKTGLIDLARRLVEEFEFDLISSGGTAQALKDAGLPVTKVADYTGSPEILGGRVKTLHPRIHGGILARRDVASDLTDLENNQIRPIDLVVVNLYPFESTIAKPGVTLAEAVEQIDIGGPAMLRASSKNFAHLTVLCDPAQYDEYLQELRQNNGVASLEFRQKAALKGFLHTASYDSAIASYLSGTQQHTLSGTELQSLRYGENPHQPAAWYQTGTTPTGWTAAEKLQGKELSYNNLVDLEAARRIIAEFTDTPAATIIKHTNPCGTALADTIVEAYQKAFNADATSAFGGIVALNRPIDAATASELTKTFLECVIAPDCDAEAQKILSKKSNVRVLTLADLSTGPKTLVKQIAGGFLVQAADDIAADTSQWQVVTERQPTPDELAELLFAWKVCKHVKSNAIVVTSDRTTLGVGAGQMNRIGSTKIALEQAGDKAKGAILASDGFFPFDDTVRTAAAAGISAIVQPGGSLRDQDSVKAANELGLLMVLTGVRHFLH</sequence>
<protein>
    <recommendedName>
        <fullName evidence="1">Bifunctional purine biosynthesis protein PurH</fullName>
    </recommendedName>
    <domain>
        <recommendedName>
            <fullName evidence="1">Phosphoribosylaminoimidazolecarboxamide formyltransferase</fullName>
            <ecNumber evidence="1">2.1.2.3</ecNumber>
        </recommendedName>
        <alternativeName>
            <fullName evidence="1">AICAR transformylase</fullName>
        </alternativeName>
    </domain>
    <domain>
        <recommendedName>
            <fullName evidence="1">IMP cyclohydrolase</fullName>
            <ecNumber evidence="1">3.5.4.10</ecNumber>
        </recommendedName>
        <alternativeName>
            <fullName evidence="1">ATIC</fullName>
        </alternativeName>
        <alternativeName>
            <fullName evidence="1">IMP synthase</fullName>
        </alternativeName>
        <alternativeName>
            <fullName evidence="1">Inosinicase</fullName>
        </alternativeName>
    </domain>
</protein>
<dbReference type="EC" id="2.1.2.3" evidence="1"/>
<dbReference type="EC" id="3.5.4.10" evidence="1"/>
<dbReference type="EMBL" id="BA000019">
    <property type="protein sequence ID" value="BAB74792.1"/>
    <property type="molecule type" value="Genomic_DNA"/>
</dbReference>
<dbReference type="PIR" id="AF2192">
    <property type="entry name" value="AF2192"/>
</dbReference>
<dbReference type="RefSeq" id="WP_010997244.1">
    <property type="nucleotide sequence ID" value="NZ_RSCN01000001.1"/>
</dbReference>
<dbReference type="SMR" id="Q8YSJ2"/>
<dbReference type="STRING" id="103690.gene:10495129"/>
<dbReference type="KEGG" id="ana:all3093"/>
<dbReference type="eggNOG" id="COG0138">
    <property type="taxonomic scope" value="Bacteria"/>
</dbReference>
<dbReference type="OrthoDB" id="9802065at2"/>
<dbReference type="UniPathway" id="UPA00074">
    <property type="reaction ID" value="UER00133"/>
</dbReference>
<dbReference type="UniPathway" id="UPA00074">
    <property type="reaction ID" value="UER00135"/>
</dbReference>
<dbReference type="Proteomes" id="UP000002483">
    <property type="component" value="Chromosome"/>
</dbReference>
<dbReference type="GO" id="GO:0005829">
    <property type="term" value="C:cytosol"/>
    <property type="evidence" value="ECO:0007669"/>
    <property type="project" value="TreeGrafter"/>
</dbReference>
<dbReference type="GO" id="GO:0003937">
    <property type="term" value="F:IMP cyclohydrolase activity"/>
    <property type="evidence" value="ECO:0007669"/>
    <property type="project" value="UniProtKB-UniRule"/>
</dbReference>
<dbReference type="GO" id="GO:0004643">
    <property type="term" value="F:phosphoribosylaminoimidazolecarboxamide formyltransferase activity"/>
    <property type="evidence" value="ECO:0007669"/>
    <property type="project" value="UniProtKB-UniRule"/>
</dbReference>
<dbReference type="GO" id="GO:0006189">
    <property type="term" value="P:'de novo' IMP biosynthetic process"/>
    <property type="evidence" value="ECO:0007669"/>
    <property type="project" value="UniProtKB-UniRule"/>
</dbReference>
<dbReference type="CDD" id="cd01421">
    <property type="entry name" value="IMPCH"/>
    <property type="match status" value="1"/>
</dbReference>
<dbReference type="FunFam" id="3.40.140.20:FF:000001">
    <property type="entry name" value="Bifunctional purine biosynthesis protein PurH"/>
    <property type="match status" value="1"/>
</dbReference>
<dbReference type="FunFam" id="3.40.50.1380:FF:000001">
    <property type="entry name" value="Bifunctional purine biosynthesis protein PurH"/>
    <property type="match status" value="1"/>
</dbReference>
<dbReference type="Gene3D" id="3.40.140.20">
    <property type="match status" value="2"/>
</dbReference>
<dbReference type="Gene3D" id="3.40.50.1380">
    <property type="entry name" value="Methylglyoxal synthase-like domain"/>
    <property type="match status" value="1"/>
</dbReference>
<dbReference type="HAMAP" id="MF_00139">
    <property type="entry name" value="PurH"/>
    <property type="match status" value="1"/>
</dbReference>
<dbReference type="InterPro" id="IPR024051">
    <property type="entry name" value="AICAR_Tfase_dup_dom_sf"/>
</dbReference>
<dbReference type="InterPro" id="IPR016193">
    <property type="entry name" value="Cytidine_deaminase-like"/>
</dbReference>
<dbReference type="InterPro" id="IPR011607">
    <property type="entry name" value="MGS-like_dom"/>
</dbReference>
<dbReference type="InterPro" id="IPR036914">
    <property type="entry name" value="MGS-like_dom_sf"/>
</dbReference>
<dbReference type="InterPro" id="IPR002695">
    <property type="entry name" value="PurH-like"/>
</dbReference>
<dbReference type="NCBIfam" id="NF002049">
    <property type="entry name" value="PRK00881.1"/>
    <property type="match status" value="1"/>
</dbReference>
<dbReference type="NCBIfam" id="TIGR00355">
    <property type="entry name" value="purH"/>
    <property type="match status" value="1"/>
</dbReference>
<dbReference type="PANTHER" id="PTHR11692:SF0">
    <property type="entry name" value="BIFUNCTIONAL PURINE BIOSYNTHESIS PROTEIN ATIC"/>
    <property type="match status" value="1"/>
</dbReference>
<dbReference type="PANTHER" id="PTHR11692">
    <property type="entry name" value="BIFUNCTIONAL PURINE BIOSYNTHESIS PROTEIN PURH"/>
    <property type="match status" value="1"/>
</dbReference>
<dbReference type="Pfam" id="PF01808">
    <property type="entry name" value="AICARFT_IMPCHas"/>
    <property type="match status" value="1"/>
</dbReference>
<dbReference type="Pfam" id="PF02142">
    <property type="entry name" value="MGS"/>
    <property type="match status" value="1"/>
</dbReference>
<dbReference type="PIRSF" id="PIRSF000414">
    <property type="entry name" value="AICARFT_IMPCHas"/>
    <property type="match status" value="1"/>
</dbReference>
<dbReference type="SMART" id="SM00798">
    <property type="entry name" value="AICARFT_IMPCHas"/>
    <property type="match status" value="1"/>
</dbReference>
<dbReference type="SMART" id="SM00851">
    <property type="entry name" value="MGS"/>
    <property type="match status" value="1"/>
</dbReference>
<dbReference type="SUPFAM" id="SSF53927">
    <property type="entry name" value="Cytidine deaminase-like"/>
    <property type="match status" value="1"/>
</dbReference>
<dbReference type="SUPFAM" id="SSF52335">
    <property type="entry name" value="Methylglyoxal synthase-like"/>
    <property type="match status" value="1"/>
</dbReference>
<dbReference type="PROSITE" id="PS51855">
    <property type="entry name" value="MGS"/>
    <property type="match status" value="1"/>
</dbReference>
<proteinExistence type="inferred from homology"/>
<reference key="1">
    <citation type="journal article" date="2001" name="DNA Res.">
        <title>Complete genomic sequence of the filamentous nitrogen-fixing cyanobacterium Anabaena sp. strain PCC 7120.</title>
        <authorList>
            <person name="Kaneko T."/>
            <person name="Nakamura Y."/>
            <person name="Wolk C.P."/>
            <person name="Kuritz T."/>
            <person name="Sasamoto S."/>
            <person name="Watanabe A."/>
            <person name="Iriguchi M."/>
            <person name="Ishikawa A."/>
            <person name="Kawashima K."/>
            <person name="Kimura T."/>
            <person name="Kishida Y."/>
            <person name="Kohara M."/>
            <person name="Matsumoto M."/>
            <person name="Matsuno A."/>
            <person name="Muraki A."/>
            <person name="Nakazaki N."/>
            <person name="Shimpo S."/>
            <person name="Sugimoto M."/>
            <person name="Takazawa M."/>
            <person name="Yamada M."/>
            <person name="Yasuda M."/>
            <person name="Tabata S."/>
        </authorList>
    </citation>
    <scope>NUCLEOTIDE SEQUENCE [LARGE SCALE GENOMIC DNA]</scope>
    <source>
        <strain>PCC 7120 / SAG 25.82 / UTEX 2576</strain>
    </source>
</reference>
<keyword id="KW-0378">Hydrolase</keyword>
<keyword id="KW-0511">Multifunctional enzyme</keyword>
<keyword id="KW-0658">Purine biosynthesis</keyword>
<keyword id="KW-1185">Reference proteome</keyword>
<keyword id="KW-0808">Transferase</keyword>
<name>PUR9_NOSS1</name>
<feature type="chain" id="PRO_0000192067" description="Bifunctional purine biosynthesis protein PurH">
    <location>
        <begin position="1"/>
        <end position="506"/>
    </location>
</feature>
<feature type="domain" description="MGS-like" evidence="2">
    <location>
        <begin position="1"/>
        <end position="146"/>
    </location>
</feature>
<evidence type="ECO:0000255" key="1">
    <source>
        <dbReference type="HAMAP-Rule" id="MF_00139"/>
    </source>
</evidence>
<evidence type="ECO:0000255" key="2">
    <source>
        <dbReference type="PROSITE-ProRule" id="PRU01202"/>
    </source>
</evidence>
<comment type="catalytic activity">
    <reaction evidence="1">
        <text>(6R)-10-formyltetrahydrofolate + 5-amino-1-(5-phospho-beta-D-ribosyl)imidazole-4-carboxamide = 5-formamido-1-(5-phospho-D-ribosyl)imidazole-4-carboxamide + (6S)-5,6,7,8-tetrahydrofolate</text>
        <dbReference type="Rhea" id="RHEA:22192"/>
        <dbReference type="ChEBI" id="CHEBI:57453"/>
        <dbReference type="ChEBI" id="CHEBI:58467"/>
        <dbReference type="ChEBI" id="CHEBI:58475"/>
        <dbReference type="ChEBI" id="CHEBI:195366"/>
        <dbReference type="EC" id="2.1.2.3"/>
    </reaction>
</comment>
<comment type="catalytic activity">
    <reaction evidence="1">
        <text>IMP + H2O = 5-formamido-1-(5-phospho-D-ribosyl)imidazole-4-carboxamide</text>
        <dbReference type="Rhea" id="RHEA:18445"/>
        <dbReference type="ChEBI" id="CHEBI:15377"/>
        <dbReference type="ChEBI" id="CHEBI:58053"/>
        <dbReference type="ChEBI" id="CHEBI:58467"/>
        <dbReference type="EC" id="3.5.4.10"/>
    </reaction>
</comment>
<comment type="pathway">
    <text evidence="1">Purine metabolism; IMP biosynthesis via de novo pathway; 5-formamido-1-(5-phospho-D-ribosyl)imidazole-4-carboxamide from 5-amino-1-(5-phospho-D-ribosyl)imidazole-4-carboxamide (10-formyl THF route): step 1/1.</text>
</comment>
<comment type="pathway">
    <text evidence="1">Purine metabolism; IMP biosynthesis via de novo pathway; IMP from 5-formamido-1-(5-phospho-D-ribosyl)imidazole-4-carboxamide: step 1/1.</text>
</comment>
<comment type="domain">
    <text evidence="1">The IMP cyclohydrolase activity resides in the N-terminal region.</text>
</comment>
<comment type="similarity">
    <text evidence="1">Belongs to the PurH family.</text>
</comment>
<gene>
    <name evidence="1" type="primary">purH</name>
    <name type="ordered locus">all3093</name>
</gene>
<organism>
    <name type="scientific">Nostoc sp. (strain PCC 7120 / SAG 25.82 / UTEX 2576)</name>
    <dbReference type="NCBI Taxonomy" id="103690"/>
    <lineage>
        <taxon>Bacteria</taxon>
        <taxon>Bacillati</taxon>
        <taxon>Cyanobacteriota</taxon>
        <taxon>Cyanophyceae</taxon>
        <taxon>Nostocales</taxon>
        <taxon>Nostocaceae</taxon>
        <taxon>Nostoc</taxon>
    </lineage>
</organism>